<gene>
    <name evidence="1" type="primary">hisB</name>
    <name type="ordered locus">Noca_3043</name>
</gene>
<protein>
    <recommendedName>
        <fullName evidence="1">Imidazoleglycerol-phosphate dehydratase</fullName>
        <shortName evidence="1">IGPD</shortName>
        <ecNumber evidence="1">4.2.1.19</ecNumber>
    </recommendedName>
</protein>
<feature type="chain" id="PRO_1000010315" description="Imidazoleglycerol-phosphate dehydratase">
    <location>
        <begin position="1"/>
        <end position="202"/>
    </location>
</feature>
<name>HIS7_NOCSJ</name>
<dbReference type="EC" id="4.2.1.19" evidence="1"/>
<dbReference type="EMBL" id="CP000509">
    <property type="protein sequence ID" value="ABL82545.1"/>
    <property type="molecule type" value="Genomic_DNA"/>
</dbReference>
<dbReference type="RefSeq" id="WP_011756479.1">
    <property type="nucleotide sequence ID" value="NC_008699.1"/>
</dbReference>
<dbReference type="SMR" id="A1SL60"/>
<dbReference type="STRING" id="196162.Noca_3043"/>
<dbReference type="KEGG" id="nca:Noca_3043"/>
<dbReference type="eggNOG" id="COG0131">
    <property type="taxonomic scope" value="Bacteria"/>
</dbReference>
<dbReference type="HOGENOM" id="CLU_044308_3_0_11"/>
<dbReference type="OrthoDB" id="9790411at2"/>
<dbReference type="UniPathway" id="UPA00031">
    <property type="reaction ID" value="UER00011"/>
</dbReference>
<dbReference type="Proteomes" id="UP000000640">
    <property type="component" value="Chromosome"/>
</dbReference>
<dbReference type="GO" id="GO:0005737">
    <property type="term" value="C:cytoplasm"/>
    <property type="evidence" value="ECO:0007669"/>
    <property type="project" value="UniProtKB-SubCell"/>
</dbReference>
<dbReference type="GO" id="GO:0004424">
    <property type="term" value="F:imidazoleglycerol-phosphate dehydratase activity"/>
    <property type="evidence" value="ECO:0007669"/>
    <property type="project" value="UniProtKB-UniRule"/>
</dbReference>
<dbReference type="GO" id="GO:0000105">
    <property type="term" value="P:L-histidine biosynthetic process"/>
    <property type="evidence" value="ECO:0007669"/>
    <property type="project" value="UniProtKB-UniRule"/>
</dbReference>
<dbReference type="CDD" id="cd07914">
    <property type="entry name" value="IGPD"/>
    <property type="match status" value="1"/>
</dbReference>
<dbReference type="FunFam" id="3.30.230.40:FF:000001">
    <property type="entry name" value="Imidazoleglycerol-phosphate dehydratase HisB"/>
    <property type="match status" value="1"/>
</dbReference>
<dbReference type="FunFam" id="3.30.230.40:FF:000003">
    <property type="entry name" value="Imidazoleglycerol-phosphate dehydratase HisB"/>
    <property type="match status" value="1"/>
</dbReference>
<dbReference type="Gene3D" id="3.30.230.40">
    <property type="entry name" value="Imidazole glycerol phosphate dehydratase, domain 1"/>
    <property type="match status" value="2"/>
</dbReference>
<dbReference type="HAMAP" id="MF_00076">
    <property type="entry name" value="HisB"/>
    <property type="match status" value="1"/>
</dbReference>
<dbReference type="InterPro" id="IPR038494">
    <property type="entry name" value="IGPD_sf"/>
</dbReference>
<dbReference type="InterPro" id="IPR000807">
    <property type="entry name" value="ImidazoleglycerolP_deHydtase"/>
</dbReference>
<dbReference type="InterPro" id="IPR020565">
    <property type="entry name" value="ImidazoleglycerP_deHydtase_CS"/>
</dbReference>
<dbReference type="InterPro" id="IPR020568">
    <property type="entry name" value="Ribosomal_Su5_D2-typ_SF"/>
</dbReference>
<dbReference type="NCBIfam" id="NF002110">
    <property type="entry name" value="PRK00951.1-6"/>
    <property type="match status" value="1"/>
</dbReference>
<dbReference type="NCBIfam" id="NF002111">
    <property type="entry name" value="PRK00951.2-1"/>
    <property type="match status" value="1"/>
</dbReference>
<dbReference type="NCBIfam" id="NF002114">
    <property type="entry name" value="PRK00951.2-4"/>
    <property type="match status" value="1"/>
</dbReference>
<dbReference type="PANTHER" id="PTHR23133:SF2">
    <property type="entry name" value="IMIDAZOLEGLYCEROL-PHOSPHATE DEHYDRATASE"/>
    <property type="match status" value="1"/>
</dbReference>
<dbReference type="PANTHER" id="PTHR23133">
    <property type="entry name" value="IMIDAZOLEGLYCEROL-PHOSPHATE DEHYDRATASE HIS7"/>
    <property type="match status" value="1"/>
</dbReference>
<dbReference type="Pfam" id="PF00475">
    <property type="entry name" value="IGPD"/>
    <property type="match status" value="1"/>
</dbReference>
<dbReference type="SUPFAM" id="SSF54211">
    <property type="entry name" value="Ribosomal protein S5 domain 2-like"/>
    <property type="match status" value="2"/>
</dbReference>
<dbReference type="PROSITE" id="PS00954">
    <property type="entry name" value="IGP_DEHYDRATASE_1"/>
    <property type="match status" value="1"/>
</dbReference>
<dbReference type="PROSITE" id="PS00955">
    <property type="entry name" value="IGP_DEHYDRATASE_2"/>
    <property type="match status" value="1"/>
</dbReference>
<sequence length="202" mass="21936">MTRTARIERQTSESKVLVEVDLDGTGRHDVSTGVGFYDHMLTAFARHALVDLTVQTDGDTHIDAHHTVEDTAIALGQALRQALGDKRGIRRFGDATVPLDEALVQAVVDVSGRPYCVHTGEPEGQQYVQLGGTTPAYLGSLTQHVFESIAFHGHFALHVRVLAGREPHHIVETQFKAVARAFRDAVALDPRETGIPSTKGAL</sequence>
<comment type="catalytic activity">
    <reaction evidence="1">
        <text>D-erythro-1-(imidazol-4-yl)glycerol 3-phosphate = 3-(imidazol-4-yl)-2-oxopropyl phosphate + H2O</text>
        <dbReference type="Rhea" id="RHEA:11040"/>
        <dbReference type="ChEBI" id="CHEBI:15377"/>
        <dbReference type="ChEBI" id="CHEBI:57766"/>
        <dbReference type="ChEBI" id="CHEBI:58278"/>
        <dbReference type="EC" id="4.2.1.19"/>
    </reaction>
</comment>
<comment type="pathway">
    <text evidence="1">Amino-acid biosynthesis; L-histidine biosynthesis; L-histidine from 5-phospho-alpha-D-ribose 1-diphosphate: step 6/9.</text>
</comment>
<comment type="subcellular location">
    <subcellularLocation>
        <location evidence="1">Cytoplasm</location>
    </subcellularLocation>
</comment>
<comment type="similarity">
    <text evidence="1">Belongs to the imidazoleglycerol-phosphate dehydratase family.</text>
</comment>
<evidence type="ECO:0000255" key="1">
    <source>
        <dbReference type="HAMAP-Rule" id="MF_00076"/>
    </source>
</evidence>
<proteinExistence type="inferred from homology"/>
<organism>
    <name type="scientific">Nocardioides sp. (strain ATCC BAA-499 / JS614)</name>
    <dbReference type="NCBI Taxonomy" id="196162"/>
    <lineage>
        <taxon>Bacteria</taxon>
        <taxon>Bacillati</taxon>
        <taxon>Actinomycetota</taxon>
        <taxon>Actinomycetes</taxon>
        <taxon>Propionibacteriales</taxon>
        <taxon>Nocardioidaceae</taxon>
        <taxon>Nocardioides</taxon>
    </lineage>
</organism>
<keyword id="KW-0028">Amino-acid biosynthesis</keyword>
<keyword id="KW-0963">Cytoplasm</keyword>
<keyword id="KW-0368">Histidine biosynthesis</keyword>
<keyword id="KW-0456">Lyase</keyword>
<keyword id="KW-1185">Reference proteome</keyword>
<accession>A1SL60</accession>
<reference key="1">
    <citation type="submission" date="2006-12" db="EMBL/GenBank/DDBJ databases">
        <title>Complete sequence of chromosome 1 of Nocardioides sp. JS614.</title>
        <authorList>
            <person name="Copeland A."/>
            <person name="Lucas S."/>
            <person name="Lapidus A."/>
            <person name="Barry K."/>
            <person name="Detter J.C."/>
            <person name="Glavina del Rio T."/>
            <person name="Hammon N."/>
            <person name="Israni S."/>
            <person name="Dalin E."/>
            <person name="Tice H."/>
            <person name="Pitluck S."/>
            <person name="Thompson L.S."/>
            <person name="Brettin T."/>
            <person name="Bruce D."/>
            <person name="Han C."/>
            <person name="Tapia R."/>
            <person name="Schmutz J."/>
            <person name="Larimer F."/>
            <person name="Land M."/>
            <person name="Hauser L."/>
            <person name="Kyrpides N."/>
            <person name="Kim E."/>
            <person name="Mattes T."/>
            <person name="Gossett J."/>
            <person name="Richardson P."/>
        </authorList>
    </citation>
    <scope>NUCLEOTIDE SEQUENCE [LARGE SCALE GENOMIC DNA]</scope>
    <source>
        <strain>ATCC BAA-499 / JS614</strain>
    </source>
</reference>